<evidence type="ECO:0000255" key="1">
    <source>
        <dbReference type="HAMAP-Rule" id="MF_00378"/>
    </source>
</evidence>
<name>EX7L_STACT</name>
<sequence length="446" mass="50866">MSDYLSVTALTKYIKYKFDQDPHLQSVLLKGELSNFKKHSSGHLYFNLKDNNSVVNAMMFKAQANKLDFNPKEGDEVLIEARVSVYERQGNYQIYVNKMHLDGIGNLYQKLEALKKELKKQGLFDTKHKKEIPRFPKKIAVLTASTGAAIRDIYSTINSRYPLVEQIQISTLVQGKQAKDDIVNKIKYADTLDADVMIVGRGGGSIEDLWNFNEEEVVRAIFEAKTPVISAVGHETDFTLSDFVADVRAATPTQAAVIATPDQVELSQYIKQTELNLSRHIIQIINNKKKHLEHVASYYKFKQPSLLYDQQIQKKDDFERQLNLSITTKLNNALQKVELLTNRINLKDLKQQTLQGIQSRLQLHDSLNKSIINIIDNSKKRLSQRIENLNSLSPSNTMLRGYTIVNKNEQVITSTQSLEKNDEINLQMKDGTVDAIVKKVRCNHNE</sequence>
<feature type="chain" id="PRO_1000200680" description="Exodeoxyribonuclease 7 large subunit">
    <location>
        <begin position="1"/>
        <end position="446"/>
    </location>
</feature>
<dbReference type="EC" id="3.1.11.6" evidence="1"/>
<dbReference type="EMBL" id="AM295250">
    <property type="protein sequence ID" value="CAL28055.1"/>
    <property type="molecule type" value="Genomic_DNA"/>
</dbReference>
<dbReference type="RefSeq" id="WP_015900396.1">
    <property type="nucleotide sequence ID" value="NC_012121.1"/>
</dbReference>
<dbReference type="SMR" id="B9DNP9"/>
<dbReference type="GeneID" id="93793572"/>
<dbReference type="KEGG" id="sca:SCA_1147"/>
<dbReference type="eggNOG" id="COG1570">
    <property type="taxonomic scope" value="Bacteria"/>
</dbReference>
<dbReference type="HOGENOM" id="CLU_023625_3_1_9"/>
<dbReference type="OrthoDB" id="9802795at2"/>
<dbReference type="BioCyc" id="SCAR396513:SCA_RS05745-MONOMER"/>
<dbReference type="Proteomes" id="UP000000444">
    <property type="component" value="Chromosome"/>
</dbReference>
<dbReference type="GO" id="GO:0005737">
    <property type="term" value="C:cytoplasm"/>
    <property type="evidence" value="ECO:0007669"/>
    <property type="project" value="UniProtKB-SubCell"/>
</dbReference>
<dbReference type="GO" id="GO:0009318">
    <property type="term" value="C:exodeoxyribonuclease VII complex"/>
    <property type="evidence" value="ECO:0007669"/>
    <property type="project" value="InterPro"/>
</dbReference>
<dbReference type="GO" id="GO:0008855">
    <property type="term" value="F:exodeoxyribonuclease VII activity"/>
    <property type="evidence" value="ECO:0007669"/>
    <property type="project" value="UniProtKB-UniRule"/>
</dbReference>
<dbReference type="GO" id="GO:0003676">
    <property type="term" value="F:nucleic acid binding"/>
    <property type="evidence" value="ECO:0007669"/>
    <property type="project" value="InterPro"/>
</dbReference>
<dbReference type="GO" id="GO:0006308">
    <property type="term" value="P:DNA catabolic process"/>
    <property type="evidence" value="ECO:0007669"/>
    <property type="project" value="UniProtKB-UniRule"/>
</dbReference>
<dbReference type="CDD" id="cd04489">
    <property type="entry name" value="ExoVII_LU_OBF"/>
    <property type="match status" value="1"/>
</dbReference>
<dbReference type="HAMAP" id="MF_00378">
    <property type="entry name" value="Exonuc_7_L"/>
    <property type="match status" value="1"/>
</dbReference>
<dbReference type="InterPro" id="IPR003753">
    <property type="entry name" value="Exonuc_VII_L"/>
</dbReference>
<dbReference type="InterPro" id="IPR020579">
    <property type="entry name" value="Exonuc_VII_lsu_C"/>
</dbReference>
<dbReference type="InterPro" id="IPR025824">
    <property type="entry name" value="OB-fold_nuc-bd_dom"/>
</dbReference>
<dbReference type="NCBIfam" id="TIGR00237">
    <property type="entry name" value="xseA"/>
    <property type="match status" value="1"/>
</dbReference>
<dbReference type="PANTHER" id="PTHR30008">
    <property type="entry name" value="EXODEOXYRIBONUCLEASE 7 LARGE SUBUNIT"/>
    <property type="match status" value="1"/>
</dbReference>
<dbReference type="PANTHER" id="PTHR30008:SF0">
    <property type="entry name" value="EXODEOXYRIBONUCLEASE 7 LARGE SUBUNIT"/>
    <property type="match status" value="1"/>
</dbReference>
<dbReference type="Pfam" id="PF02601">
    <property type="entry name" value="Exonuc_VII_L"/>
    <property type="match status" value="1"/>
</dbReference>
<dbReference type="Pfam" id="PF13742">
    <property type="entry name" value="tRNA_anti_2"/>
    <property type="match status" value="1"/>
</dbReference>
<organism>
    <name type="scientific">Staphylococcus carnosus (strain TM300)</name>
    <dbReference type="NCBI Taxonomy" id="396513"/>
    <lineage>
        <taxon>Bacteria</taxon>
        <taxon>Bacillati</taxon>
        <taxon>Bacillota</taxon>
        <taxon>Bacilli</taxon>
        <taxon>Bacillales</taxon>
        <taxon>Staphylococcaceae</taxon>
        <taxon>Staphylococcus</taxon>
    </lineage>
</organism>
<proteinExistence type="inferred from homology"/>
<keyword id="KW-0963">Cytoplasm</keyword>
<keyword id="KW-0269">Exonuclease</keyword>
<keyword id="KW-0378">Hydrolase</keyword>
<keyword id="KW-0540">Nuclease</keyword>
<keyword id="KW-1185">Reference proteome</keyword>
<comment type="function">
    <text evidence="1">Bidirectionally degrades single-stranded DNA into large acid-insoluble oligonucleotides, which are then degraded further into small acid-soluble oligonucleotides.</text>
</comment>
<comment type="catalytic activity">
    <reaction evidence="1">
        <text>Exonucleolytic cleavage in either 5'- to 3'- or 3'- to 5'-direction to yield nucleoside 5'-phosphates.</text>
        <dbReference type="EC" id="3.1.11.6"/>
    </reaction>
</comment>
<comment type="subunit">
    <text evidence="1">Heterooligomer composed of large and small subunits.</text>
</comment>
<comment type="subcellular location">
    <subcellularLocation>
        <location evidence="1">Cytoplasm</location>
    </subcellularLocation>
</comment>
<comment type="similarity">
    <text evidence="1">Belongs to the XseA family.</text>
</comment>
<reference key="1">
    <citation type="journal article" date="2009" name="Appl. Environ. Microbiol.">
        <title>Genome analysis of the meat starter culture bacterium Staphylococcus carnosus TM300.</title>
        <authorList>
            <person name="Rosenstein R."/>
            <person name="Nerz C."/>
            <person name="Biswas L."/>
            <person name="Resch A."/>
            <person name="Raddatz G."/>
            <person name="Schuster S.C."/>
            <person name="Goetz F."/>
        </authorList>
    </citation>
    <scope>NUCLEOTIDE SEQUENCE [LARGE SCALE GENOMIC DNA]</scope>
    <source>
        <strain>TM300</strain>
    </source>
</reference>
<gene>
    <name evidence="1" type="primary">xseA</name>
    <name type="ordered locus">Sca_1147</name>
</gene>
<protein>
    <recommendedName>
        <fullName evidence="1">Exodeoxyribonuclease 7 large subunit</fullName>
        <ecNumber evidence="1">3.1.11.6</ecNumber>
    </recommendedName>
    <alternativeName>
        <fullName evidence="1">Exodeoxyribonuclease VII large subunit</fullName>
        <shortName evidence="1">Exonuclease VII large subunit</shortName>
    </alternativeName>
</protein>
<accession>B9DNP9</accession>